<sequence>MELTTRTLPTRKHIALVAHDHCKQMLMNWVERHQPLLEKHVLYATGTTGNLIQRATGMDVNAMLSGPMGGDQQVGALISEGKIDVLIFFWDPLNAVPHDPDVKALLRLATVWNIPVATNVSTADFIIQSPHFNDAVDILIPDYARYLAERLK</sequence>
<comment type="function">
    <text evidence="1">Catalyzes the formation of methylglyoxal from dihydroxyacetone phosphate.</text>
</comment>
<comment type="catalytic activity">
    <reaction evidence="1">
        <text>dihydroxyacetone phosphate = methylglyoxal + phosphate</text>
        <dbReference type="Rhea" id="RHEA:17937"/>
        <dbReference type="ChEBI" id="CHEBI:17158"/>
        <dbReference type="ChEBI" id="CHEBI:43474"/>
        <dbReference type="ChEBI" id="CHEBI:57642"/>
        <dbReference type="EC" id="4.2.3.3"/>
    </reaction>
</comment>
<comment type="similarity">
    <text evidence="1">Belongs to the methylglyoxal synthase family.</text>
</comment>
<feature type="chain" id="PRO_1000129007" description="Methylglyoxal synthase">
    <location>
        <begin position="1"/>
        <end position="152"/>
    </location>
</feature>
<feature type="domain" description="MGS-like" evidence="1">
    <location>
        <begin position="6"/>
        <end position="152"/>
    </location>
</feature>
<feature type="active site" description="Proton donor/acceptor" evidence="1">
    <location>
        <position position="71"/>
    </location>
</feature>
<feature type="binding site" evidence="1">
    <location>
        <position position="19"/>
    </location>
    <ligand>
        <name>substrate</name>
    </ligand>
</feature>
<feature type="binding site" evidence="1">
    <location>
        <position position="23"/>
    </location>
    <ligand>
        <name>substrate</name>
    </ligand>
</feature>
<feature type="binding site" evidence="1">
    <location>
        <begin position="45"/>
        <end position="48"/>
    </location>
    <ligand>
        <name>substrate</name>
    </ligand>
</feature>
<feature type="binding site" evidence="1">
    <location>
        <begin position="65"/>
        <end position="66"/>
    </location>
    <ligand>
        <name>substrate</name>
    </ligand>
</feature>
<feature type="binding site" evidence="1">
    <location>
        <position position="98"/>
    </location>
    <ligand>
        <name>substrate</name>
    </ligand>
</feature>
<accession>B4T206</accession>
<proteinExistence type="inferred from homology"/>
<evidence type="ECO:0000255" key="1">
    <source>
        <dbReference type="HAMAP-Rule" id="MF_00549"/>
    </source>
</evidence>
<protein>
    <recommendedName>
        <fullName evidence="1">Methylglyoxal synthase</fullName>
        <shortName evidence="1">MGS</shortName>
        <ecNumber evidence="1">4.2.3.3</ecNumber>
    </recommendedName>
</protein>
<dbReference type="EC" id="4.2.3.3" evidence="1"/>
<dbReference type="EMBL" id="CP001113">
    <property type="protein sequence ID" value="ACF61250.1"/>
    <property type="molecule type" value="Genomic_DNA"/>
</dbReference>
<dbReference type="RefSeq" id="WP_000424187.1">
    <property type="nucleotide sequence ID" value="NZ_CCMR01000003.1"/>
</dbReference>
<dbReference type="SMR" id="B4T206"/>
<dbReference type="KEGG" id="see:SNSL254_A1117"/>
<dbReference type="HOGENOM" id="CLU_120420_0_1_6"/>
<dbReference type="Proteomes" id="UP000008824">
    <property type="component" value="Chromosome"/>
</dbReference>
<dbReference type="GO" id="GO:0005829">
    <property type="term" value="C:cytosol"/>
    <property type="evidence" value="ECO:0007669"/>
    <property type="project" value="TreeGrafter"/>
</dbReference>
<dbReference type="GO" id="GO:0008929">
    <property type="term" value="F:methylglyoxal synthase activity"/>
    <property type="evidence" value="ECO:0007669"/>
    <property type="project" value="UniProtKB-UniRule"/>
</dbReference>
<dbReference type="GO" id="GO:0019242">
    <property type="term" value="P:methylglyoxal biosynthetic process"/>
    <property type="evidence" value="ECO:0007669"/>
    <property type="project" value="UniProtKB-UniRule"/>
</dbReference>
<dbReference type="CDD" id="cd01422">
    <property type="entry name" value="MGS"/>
    <property type="match status" value="1"/>
</dbReference>
<dbReference type="FunFam" id="3.40.50.1380:FF:000002">
    <property type="entry name" value="Methylglyoxal synthase"/>
    <property type="match status" value="1"/>
</dbReference>
<dbReference type="Gene3D" id="3.40.50.1380">
    <property type="entry name" value="Methylglyoxal synthase-like domain"/>
    <property type="match status" value="1"/>
</dbReference>
<dbReference type="HAMAP" id="MF_00549">
    <property type="entry name" value="Methylglyoxal_synth"/>
    <property type="match status" value="1"/>
</dbReference>
<dbReference type="InterPro" id="IPR004363">
    <property type="entry name" value="Methylgl_synth"/>
</dbReference>
<dbReference type="InterPro" id="IPR018148">
    <property type="entry name" value="Methylglyoxal_synth_AS"/>
</dbReference>
<dbReference type="InterPro" id="IPR011607">
    <property type="entry name" value="MGS-like_dom"/>
</dbReference>
<dbReference type="InterPro" id="IPR036914">
    <property type="entry name" value="MGS-like_dom_sf"/>
</dbReference>
<dbReference type="NCBIfam" id="TIGR00160">
    <property type="entry name" value="MGSA"/>
    <property type="match status" value="1"/>
</dbReference>
<dbReference type="NCBIfam" id="NF003559">
    <property type="entry name" value="PRK05234.1"/>
    <property type="match status" value="1"/>
</dbReference>
<dbReference type="PANTHER" id="PTHR30492">
    <property type="entry name" value="METHYLGLYOXAL SYNTHASE"/>
    <property type="match status" value="1"/>
</dbReference>
<dbReference type="PANTHER" id="PTHR30492:SF0">
    <property type="entry name" value="METHYLGLYOXAL SYNTHASE"/>
    <property type="match status" value="1"/>
</dbReference>
<dbReference type="Pfam" id="PF02142">
    <property type="entry name" value="MGS"/>
    <property type="match status" value="1"/>
</dbReference>
<dbReference type="PIRSF" id="PIRSF006614">
    <property type="entry name" value="Methylglyox_syn"/>
    <property type="match status" value="1"/>
</dbReference>
<dbReference type="SMART" id="SM00851">
    <property type="entry name" value="MGS"/>
    <property type="match status" value="1"/>
</dbReference>
<dbReference type="SUPFAM" id="SSF52335">
    <property type="entry name" value="Methylglyoxal synthase-like"/>
    <property type="match status" value="1"/>
</dbReference>
<dbReference type="PROSITE" id="PS01335">
    <property type="entry name" value="METHYLGLYOXAL_SYNTH"/>
    <property type="match status" value="1"/>
</dbReference>
<dbReference type="PROSITE" id="PS51855">
    <property type="entry name" value="MGS"/>
    <property type="match status" value="1"/>
</dbReference>
<organism>
    <name type="scientific">Salmonella newport (strain SL254)</name>
    <dbReference type="NCBI Taxonomy" id="423368"/>
    <lineage>
        <taxon>Bacteria</taxon>
        <taxon>Pseudomonadati</taxon>
        <taxon>Pseudomonadota</taxon>
        <taxon>Gammaproteobacteria</taxon>
        <taxon>Enterobacterales</taxon>
        <taxon>Enterobacteriaceae</taxon>
        <taxon>Salmonella</taxon>
    </lineage>
</organism>
<gene>
    <name evidence="1" type="primary">mgsA</name>
    <name type="ordered locus">SNSL254_A1117</name>
</gene>
<reference key="1">
    <citation type="journal article" date="2011" name="J. Bacteriol.">
        <title>Comparative genomics of 28 Salmonella enterica isolates: evidence for CRISPR-mediated adaptive sublineage evolution.</title>
        <authorList>
            <person name="Fricke W.F."/>
            <person name="Mammel M.K."/>
            <person name="McDermott P.F."/>
            <person name="Tartera C."/>
            <person name="White D.G."/>
            <person name="Leclerc J.E."/>
            <person name="Ravel J."/>
            <person name="Cebula T.A."/>
        </authorList>
    </citation>
    <scope>NUCLEOTIDE SEQUENCE [LARGE SCALE GENOMIC DNA]</scope>
    <source>
        <strain>SL254</strain>
    </source>
</reference>
<name>MGSA_SALNS</name>
<keyword id="KW-0456">Lyase</keyword>